<accession>A3PBF2</accession>
<name>HIS6_PROM0</name>
<feature type="chain" id="PRO_1000063111" description="Imidazole glycerol phosphate synthase subunit HisF">
    <location>
        <begin position="1"/>
        <end position="256"/>
    </location>
</feature>
<feature type="active site" evidence="1">
    <location>
        <position position="11"/>
    </location>
</feature>
<feature type="active site" evidence="1">
    <location>
        <position position="130"/>
    </location>
</feature>
<proteinExistence type="inferred from homology"/>
<sequence>MVALRLIPCLDVAHGRVVKGVNFVNLRDSGDPVELACRYSDEGADELVFLDIRASVENRNTLVDLVSRTAKSVKIPFTVGGGIDSVASINDLLRAGADKVSLNSSAVRNPDLVSKSSREFGNQCIVIAIDAKRKINKTDEWEVYVKGGRENTGIDVLSWAKKVEELGAGEILLTSMDGDGTQNGYDLHLTKSVANIVNLPVIASGGAGCLEDIYDVFIEGRASAALLASLLHDRKLSLREIKTFLLDKKLPIRPCE</sequence>
<protein>
    <recommendedName>
        <fullName evidence="1">Imidazole glycerol phosphate synthase subunit HisF</fullName>
        <ecNumber evidence="1">4.3.2.10</ecNumber>
    </recommendedName>
    <alternativeName>
        <fullName evidence="1">IGP synthase cyclase subunit</fullName>
    </alternativeName>
    <alternativeName>
        <fullName evidence="1">IGP synthase subunit HisF</fullName>
    </alternativeName>
    <alternativeName>
        <fullName evidence="1">ImGP synthase subunit HisF</fullName>
        <shortName evidence="1">IGPS subunit HisF</shortName>
    </alternativeName>
</protein>
<gene>
    <name evidence="1" type="primary">hisF</name>
    <name type="ordered locus">P9301_04541</name>
</gene>
<reference key="1">
    <citation type="journal article" date="2007" name="PLoS Genet.">
        <title>Patterns and implications of gene gain and loss in the evolution of Prochlorococcus.</title>
        <authorList>
            <person name="Kettler G.C."/>
            <person name="Martiny A.C."/>
            <person name="Huang K."/>
            <person name="Zucker J."/>
            <person name="Coleman M.L."/>
            <person name="Rodrigue S."/>
            <person name="Chen F."/>
            <person name="Lapidus A."/>
            <person name="Ferriera S."/>
            <person name="Johnson J."/>
            <person name="Steglich C."/>
            <person name="Church G.M."/>
            <person name="Richardson P."/>
            <person name="Chisholm S.W."/>
        </authorList>
    </citation>
    <scope>NUCLEOTIDE SEQUENCE [LARGE SCALE GENOMIC DNA]</scope>
    <source>
        <strain>MIT 9301</strain>
    </source>
</reference>
<dbReference type="EC" id="4.3.2.10" evidence="1"/>
<dbReference type="EMBL" id="CP000576">
    <property type="protein sequence ID" value="ABO17077.1"/>
    <property type="molecule type" value="Genomic_DNA"/>
</dbReference>
<dbReference type="RefSeq" id="WP_011862452.1">
    <property type="nucleotide sequence ID" value="NC_009091.1"/>
</dbReference>
<dbReference type="SMR" id="A3PBF2"/>
<dbReference type="STRING" id="167546.P9301_04541"/>
<dbReference type="KEGG" id="pmg:P9301_04541"/>
<dbReference type="eggNOG" id="COG0107">
    <property type="taxonomic scope" value="Bacteria"/>
</dbReference>
<dbReference type="HOGENOM" id="CLU_048577_4_0_3"/>
<dbReference type="OrthoDB" id="9781903at2"/>
<dbReference type="UniPathway" id="UPA00031">
    <property type="reaction ID" value="UER00010"/>
</dbReference>
<dbReference type="Proteomes" id="UP000001430">
    <property type="component" value="Chromosome"/>
</dbReference>
<dbReference type="GO" id="GO:0005737">
    <property type="term" value="C:cytoplasm"/>
    <property type="evidence" value="ECO:0007669"/>
    <property type="project" value="UniProtKB-SubCell"/>
</dbReference>
<dbReference type="GO" id="GO:0000107">
    <property type="term" value="F:imidazoleglycerol-phosphate synthase activity"/>
    <property type="evidence" value="ECO:0007669"/>
    <property type="project" value="UniProtKB-UniRule"/>
</dbReference>
<dbReference type="GO" id="GO:0016829">
    <property type="term" value="F:lyase activity"/>
    <property type="evidence" value="ECO:0007669"/>
    <property type="project" value="UniProtKB-KW"/>
</dbReference>
<dbReference type="GO" id="GO:0000105">
    <property type="term" value="P:L-histidine biosynthetic process"/>
    <property type="evidence" value="ECO:0007669"/>
    <property type="project" value="UniProtKB-UniRule"/>
</dbReference>
<dbReference type="CDD" id="cd04731">
    <property type="entry name" value="HisF"/>
    <property type="match status" value="1"/>
</dbReference>
<dbReference type="FunFam" id="3.20.20.70:FF:000006">
    <property type="entry name" value="Imidazole glycerol phosphate synthase subunit HisF"/>
    <property type="match status" value="1"/>
</dbReference>
<dbReference type="Gene3D" id="3.20.20.70">
    <property type="entry name" value="Aldolase class I"/>
    <property type="match status" value="1"/>
</dbReference>
<dbReference type="HAMAP" id="MF_01013">
    <property type="entry name" value="HisF"/>
    <property type="match status" value="1"/>
</dbReference>
<dbReference type="InterPro" id="IPR013785">
    <property type="entry name" value="Aldolase_TIM"/>
</dbReference>
<dbReference type="InterPro" id="IPR006062">
    <property type="entry name" value="His_biosynth"/>
</dbReference>
<dbReference type="InterPro" id="IPR004651">
    <property type="entry name" value="HisF"/>
</dbReference>
<dbReference type="InterPro" id="IPR050064">
    <property type="entry name" value="IGPS_HisA/HisF"/>
</dbReference>
<dbReference type="InterPro" id="IPR011060">
    <property type="entry name" value="RibuloseP-bd_barrel"/>
</dbReference>
<dbReference type="NCBIfam" id="TIGR00735">
    <property type="entry name" value="hisF"/>
    <property type="match status" value="1"/>
</dbReference>
<dbReference type="PANTHER" id="PTHR21235:SF2">
    <property type="entry name" value="IMIDAZOLE GLYCEROL PHOSPHATE SYNTHASE HISHF"/>
    <property type="match status" value="1"/>
</dbReference>
<dbReference type="PANTHER" id="PTHR21235">
    <property type="entry name" value="IMIDAZOLE GLYCEROL PHOSPHATE SYNTHASE SUBUNIT HISF/H IGP SYNTHASE SUBUNIT HISF/H"/>
    <property type="match status" value="1"/>
</dbReference>
<dbReference type="Pfam" id="PF00977">
    <property type="entry name" value="His_biosynth"/>
    <property type="match status" value="1"/>
</dbReference>
<dbReference type="SUPFAM" id="SSF51366">
    <property type="entry name" value="Ribulose-phoshate binding barrel"/>
    <property type="match status" value="1"/>
</dbReference>
<organism>
    <name type="scientific">Prochlorococcus marinus (strain MIT 9301)</name>
    <dbReference type="NCBI Taxonomy" id="167546"/>
    <lineage>
        <taxon>Bacteria</taxon>
        <taxon>Bacillati</taxon>
        <taxon>Cyanobacteriota</taxon>
        <taxon>Cyanophyceae</taxon>
        <taxon>Synechococcales</taxon>
        <taxon>Prochlorococcaceae</taxon>
        <taxon>Prochlorococcus</taxon>
    </lineage>
</organism>
<comment type="function">
    <text evidence="1">IGPS catalyzes the conversion of PRFAR and glutamine to IGP, AICAR and glutamate. The HisF subunit catalyzes the cyclization activity that produces IGP and AICAR from PRFAR using the ammonia provided by the HisH subunit.</text>
</comment>
<comment type="catalytic activity">
    <reaction evidence="1">
        <text>5-[(5-phospho-1-deoxy-D-ribulos-1-ylimino)methylamino]-1-(5-phospho-beta-D-ribosyl)imidazole-4-carboxamide + L-glutamine = D-erythro-1-(imidazol-4-yl)glycerol 3-phosphate + 5-amino-1-(5-phospho-beta-D-ribosyl)imidazole-4-carboxamide + L-glutamate + H(+)</text>
        <dbReference type="Rhea" id="RHEA:24793"/>
        <dbReference type="ChEBI" id="CHEBI:15378"/>
        <dbReference type="ChEBI" id="CHEBI:29985"/>
        <dbReference type="ChEBI" id="CHEBI:58278"/>
        <dbReference type="ChEBI" id="CHEBI:58359"/>
        <dbReference type="ChEBI" id="CHEBI:58475"/>
        <dbReference type="ChEBI" id="CHEBI:58525"/>
        <dbReference type="EC" id="4.3.2.10"/>
    </reaction>
</comment>
<comment type="pathway">
    <text evidence="1">Amino-acid biosynthesis; L-histidine biosynthesis; L-histidine from 5-phospho-alpha-D-ribose 1-diphosphate: step 5/9.</text>
</comment>
<comment type="subunit">
    <text evidence="1">Heterodimer of HisH and HisF.</text>
</comment>
<comment type="subcellular location">
    <subcellularLocation>
        <location evidence="1">Cytoplasm</location>
    </subcellularLocation>
</comment>
<comment type="similarity">
    <text evidence="1">Belongs to the HisA/HisF family.</text>
</comment>
<evidence type="ECO:0000255" key="1">
    <source>
        <dbReference type="HAMAP-Rule" id="MF_01013"/>
    </source>
</evidence>
<keyword id="KW-0028">Amino-acid biosynthesis</keyword>
<keyword id="KW-0963">Cytoplasm</keyword>
<keyword id="KW-0368">Histidine biosynthesis</keyword>
<keyword id="KW-0456">Lyase</keyword>
<keyword id="KW-1185">Reference proteome</keyword>